<keyword id="KW-0029">Amino-acid transport</keyword>
<keyword id="KW-0067">ATP-binding</keyword>
<keyword id="KW-0997">Cell inner membrane</keyword>
<keyword id="KW-1003">Cell membrane</keyword>
<keyword id="KW-0472">Membrane</keyword>
<keyword id="KW-0547">Nucleotide-binding</keyword>
<keyword id="KW-1185">Reference proteome</keyword>
<keyword id="KW-1278">Translocase</keyword>
<keyword id="KW-0813">Transport</keyword>
<dbReference type="EC" id="7.4.2.11" evidence="1"/>
<dbReference type="EMBL" id="AM167904">
    <property type="protein sequence ID" value="CAJ50464.1"/>
    <property type="molecule type" value="Genomic_DNA"/>
</dbReference>
<dbReference type="RefSeq" id="WP_012418494.1">
    <property type="nucleotide sequence ID" value="NC_010645.1"/>
</dbReference>
<dbReference type="SMR" id="Q2KVK2"/>
<dbReference type="STRING" id="360910.BAV2854"/>
<dbReference type="GeneID" id="92933896"/>
<dbReference type="KEGG" id="bav:BAV2854"/>
<dbReference type="eggNOG" id="COG1135">
    <property type="taxonomic scope" value="Bacteria"/>
</dbReference>
<dbReference type="HOGENOM" id="CLU_000604_1_3_4"/>
<dbReference type="OrthoDB" id="9802264at2"/>
<dbReference type="Proteomes" id="UP000001977">
    <property type="component" value="Chromosome"/>
</dbReference>
<dbReference type="GO" id="GO:0005886">
    <property type="term" value="C:plasma membrane"/>
    <property type="evidence" value="ECO:0007669"/>
    <property type="project" value="UniProtKB-SubCell"/>
</dbReference>
<dbReference type="GO" id="GO:0033232">
    <property type="term" value="F:ABC-type D-methionine transporter activity"/>
    <property type="evidence" value="ECO:0007669"/>
    <property type="project" value="UniProtKB-EC"/>
</dbReference>
<dbReference type="GO" id="GO:0005524">
    <property type="term" value="F:ATP binding"/>
    <property type="evidence" value="ECO:0007669"/>
    <property type="project" value="UniProtKB-KW"/>
</dbReference>
<dbReference type="GO" id="GO:0016887">
    <property type="term" value="F:ATP hydrolysis activity"/>
    <property type="evidence" value="ECO:0007669"/>
    <property type="project" value="InterPro"/>
</dbReference>
<dbReference type="CDD" id="cd03258">
    <property type="entry name" value="ABC_MetN_methionine_transporter"/>
    <property type="match status" value="1"/>
</dbReference>
<dbReference type="FunFam" id="3.40.50.300:FF:000056">
    <property type="entry name" value="Cell division ATP-binding protein FtsE"/>
    <property type="match status" value="1"/>
</dbReference>
<dbReference type="Gene3D" id="3.30.70.260">
    <property type="match status" value="1"/>
</dbReference>
<dbReference type="Gene3D" id="3.40.50.300">
    <property type="entry name" value="P-loop containing nucleotide triphosphate hydrolases"/>
    <property type="match status" value="1"/>
</dbReference>
<dbReference type="InterPro" id="IPR003593">
    <property type="entry name" value="AAA+_ATPase"/>
</dbReference>
<dbReference type="InterPro" id="IPR003439">
    <property type="entry name" value="ABC_transporter-like_ATP-bd"/>
</dbReference>
<dbReference type="InterPro" id="IPR017871">
    <property type="entry name" value="ABC_transporter-like_CS"/>
</dbReference>
<dbReference type="InterPro" id="IPR045865">
    <property type="entry name" value="ACT-like_dom_sf"/>
</dbReference>
<dbReference type="InterPro" id="IPR041701">
    <property type="entry name" value="MetN_ABC"/>
</dbReference>
<dbReference type="InterPro" id="IPR050086">
    <property type="entry name" value="MetN_ABC_transporter-like"/>
</dbReference>
<dbReference type="InterPro" id="IPR018449">
    <property type="entry name" value="NIL_domain"/>
</dbReference>
<dbReference type="InterPro" id="IPR027417">
    <property type="entry name" value="P-loop_NTPase"/>
</dbReference>
<dbReference type="PANTHER" id="PTHR43166">
    <property type="entry name" value="AMINO ACID IMPORT ATP-BINDING PROTEIN"/>
    <property type="match status" value="1"/>
</dbReference>
<dbReference type="PANTHER" id="PTHR43166:SF30">
    <property type="entry name" value="METHIONINE IMPORT ATP-BINDING PROTEIN METN"/>
    <property type="match status" value="1"/>
</dbReference>
<dbReference type="Pfam" id="PF00005">
    <property type="entry name" value="ABC_tran"/>
    <property type="match status" value="1"/>
</dbReference>
<dbReference type="Pfam" id="PF09383">
    <property type="entry name" value="NIL"/>
    <property type="match status" value="1"/>
</dbReference>
<dbReference type="SMART" id="SM00382">
    <property type="entry name" value="AAA"/>
    <property type="match status" value="1"/>
</dbReference>
<dbReference type="SMART" id="SM00930">
    <property type="entry name" value="NIL"/>
    <property type="match status" value="1"/>
</dbReference>
<dbReference type="SUPFAM" id="SSF55021">
    <property type="entry name" value="ACT-like"/>
    <property type="match status" value="1"/>
</dbReference>
<dbReference type="SUPFAM" id="SSF52540">
    <property type="entry name" value="P-loop containing nucleoside triphosphate hydrolases"/>
    <property type="match status" value="1"/>
</dbReference>
<dbReference type="PROSITE" id="PS00211">
    <property type="entry name" value="ABC_TRANSPORTER_1"/>
    <property type="match status" value="1"/>
</dbReference>
<dbReference type="PROSITE" id="PS50893">
    <property type="entry name" value="ABC_TRANSPORTER_2"/>
    <property type="match status" value="1"/>
</dbReference>
<dbReference type="PROSITE" id="PS51264">
    <property type="entry name" value="METN"/>
    <property type="match status" value="1"/>
</dbReference>
<sequence length="362" mass="38667">MIHIKNLSKTYATPHGRFEALRGIDLLIEQGEVFGIIGPSGAGKSTLVQCINLLERPDQGSISIGGQELTGLSEAQLRGQRRRIGMVFQGFNLLSRRTVYGNVALPLEIAGVPRQEIPGKVERLLALVGLEHLRDRYPSQISGGQKQRVGIARALANDPDVLLSDEATSALDPETTHNILALLRDINRKTGVTVVMITHQMEVVREICDRVAVLSHGQVVEMARTQDVFATPQHDVTRAMVSAATSSALTESTLAAVQARIAARAAEQPGSAARLWRLSLTGKDAGGALISDLARQHALDISLVQARVDDIQGVAVGTLFVLAQGTPQAVNNALAALAAHQISVEEIAHEPANDRPALHVAA</sequence>
<organism>
    <name type="scientific">Bordetella avium (strain 197N)</name>
    <dbReference type="NCBI Taxonomy" id="360910"/>
    <lineage>
        <taxon>Bacteria</taxon>
        <taxon>Pseudomonadati</taxon>
        <taxon>Pseudomonadota</taxon>
        <taxon>Betaproteobacteria</taxon>
        <taxon>Burkholderiales</taxon>
        <taxon>Alcaligenaceae</taxon>
        <taxon>Bordetella</taxon>
    </lineage>
</organism>
<evidence type="ECO:0000255" key="1">
    <source>
        <dbReference type="HAMAP-Rule" id="MF_01719"/>
    </source>
</evidence>
<comment type="function">
    <text evidence="1">Part of the ABC transporter complex MetNIQ involved in methionine import. Responsible for energy coupling to the transport system.</text>
</comment>
<comment type="catalytic activity">
    <reaction evidence="1">
        <text>L-methionine(out) + ATP + H2O = L-methionine(in) + ADP + phosphate + H(+)</text>
        <dbReference type="Rhea" id="RHEA:29779"/>
        <dbReference type="ChEBI" id="CHEBI:15377"/>
        <dbReference type="ChEBI" id="CHEBI:15378"/>
        <dbReference type="ChEBI" id="CHEBI:30616"/>
        <dbReference type="ChEBI" id="CHEBI:43474"/>
        <dbReference type="ChEBI" id="CHEBI:57844"/>
        <dbReference type="ChEBI" id="CHEBI:456216"/>
        <dbReference type="EC" id="7.4.2.11"/>
    </reaction>
</comment>
<comment type="catalytic activity">
    <reaction evidence="1">
        <text>D-methionine(out) + ATP + H2O = D-methionine(in) + ADP + phosphate + H(+)</text>
        <dbReference type="Rhea" id="RHEA:29767"/>
        <dbReference type="ChEBI" id="CHEBI:15377"/>
        <dbReference type="ChEBI" id="CHEBI:15378"/>
        <dbReference type="ChEBI" id="CHEBI:30616"/>
        <dbReference type="ChEBI" id="CHEBI:43474"/>
        <dbReference type="ChEBI" id="CHEBI:57932"/>
        <dbReference type="ChEBI" id="CHEBI:456216"/>
        <dbReference type="EC" id="7.4.2.11"/>
    </reaction>
</comment>
<comment type="subunit">
    <text evidence="1">The complex is composed of two ATP-binding proteins (MetN), two transmembrane proteins (MetI) and a solute-binding protein (MetQ).</text>
</comment>
<comment type="subcellular location">
    <subcellularLocation>
        <location evidence="1">Cell inner membrane</location>
        <topology evidence="1">Peripheral membrane protein</topology>
    </subcellularLocation>
</comment>
<comment type="similarity">
    <text evidence="1">Belongs to the ABC transporter superfamily. Methionine importer (TC 3.A.1.24) family.</text>
</comment>
<feature type="chain" id="PRO_0000270252" description="Methionine import ATP-binding protein MetN">
    <location>
        <begin position="1"/>
        <end position="362"/>
    </location>
</feature>
<feature type="domain" description="ABC transporter" evidence="1">
    <location>
        <begin position="2"/>
        <end position="241"/>
    </location>
</feature>
<feature type="binding site" evidence="1">
    <location>
        <begin position="38"/>
        <end position="45"/>
    </location>
    <ligand>
        <name>ATP</name>
        <dbReference type="ChEBI" id="CHEBI:30616"/>
    </ligand>
</feature>
<accession>Q2KVK2</accession>
<protein>
    <recommendedName>
        <fullName evidence="1">Methionine import ATP-binding protein MetN</fullName>
        <ecNumber evidence="1">7.4.2.11</ecNumber>
    </recommendedName>
</protein>
<gene>
    <name evidence="1" type="primary">metN</name>
    <name type="ordered locus">BAV2854</name>
</gene>
<proteinExistence type="inferred from homology"/>
<reference key="1">
    <citation type="journal article" date="2006" name="J. Bacteriol.">
        <title>Comparison of the genome sequence of the poultry pathogen Bordetella avium with those of B. bronchiseptica, B. pertussis, and B. parapertussis reveals extensive diversity in surface structures associated with host interaction.</title>
        <authorList>
            <person name="Sebaihia M."/>
            <person name="Preston A."/>
            <person name="Maskell D.J."/>
            <person name="Kuzmiak H."/>
            <person name="Connell T.D."/>
            <person name="King N.D."/>
            <person name="Orndorff P.E."/>
            <person name="Miyamoto D.M."/>
            <person name="Thomson N.R."/>
            <person name="Harris D."/>
            <person name="Goble A."/>
            <person name="Lord A."/>
            <person name="Murphy L."/>
            <person name="Quail M.A."/>
            <person name="Rutter S."/>
            <person name="Squares R."/>
            <person name="Squares S."/>
            <person name="Woodward J."/>
            <person name="Parkhill J."/>
            <person name="Temple L.M."/>
        </authorList>
    </citation>
    <scope>NUCLEOTIDE SEQUENCE [LARGE SCALE GENOMIC DNA]</scope>
    <source>
        <strain>197N</strain>
    </source>
</reference>
<name>METN_BORA1</name>